<accession>Q8G0P3</accession>
<accession>G0K9W8</accession>
<keyword id="KW-0997">Cell inner membrane</keyword>
<keyword id="KW-1003">Cell membrane</keyword>
<keyword id="KW-0328">Glycosyltransferase</keyword>
<keyword id="KW-0460">Magnesium</keyword>
<keyword id="KW-0472">Membrane</keyword>
<keyword id="KW-0479">Metal-binding</keyword>
<keyword id="KW-0660">Purine salvage</keyword>
<keyword id="KW-0808">Transferase</keyword>
<gene>
    <name evidence="1" type="primary">gpt</name>
    <name type="ordered locus">BR1046</name>
    <name type="ordered locus">BS1330_I1042</name>
</gene>
<name>XGPT_BRUSU</name>
<dbReference type="EC" id="2.4.2.-" evidence="1"/>
<dbReference type="EC" id="2.4.2.22" evidence="1"/>
<dbReference type="EMBL" id="AE014291">
    <property type="protein sequence ID" value="AAN29966.1"/>
    <property type="molecule type" value="Genomic_DNA"/>
</dbReference>
<dbReference type="EMBL" id="CP002997">
    <property type="protein sequence ID" value="AEM18384.1"/>
    <property type="molecule type" value="Genomic_DNA"/>
</dbReference>
<dbReference type="RefSeq" id="WP_004688357.1">
    <property type="nucleotide sequence ID" value="NZ_KN046804.1"/>
</dbReference>
<dbReference type="SMR" id="Q8G0P3"/>
<dbReference type="GeneID" id="97533692"/>
<dbReference type="KEGG" id="bms:BR1046"/>
<dbReference type="KEGG" id="bsi:BS1330_I1042"/>
<dbReference type="PATRIC" id="fig|204722.22.peg.781"/>
<dbReference type="HOGENOM" id="CLU_080904_3_0_5"/>
<dbReference type="PhylomeDB" id="Q8G0P3"/>
<dbReference type="UniPathway" id="UPA00602">
    <property type="reaction ID" value="UER00658"/>
</dbReference>
<dbReference type="UniPathway" id="UPA00909">
    <property type="reaction ID" value="UER00887"/>
</dbReference>
<dbReference type="Proteomes" id="UP000007104">
    <property type="component" value="Chromosome I"/>
</dbReference>
<dbReference type="GO" id="GO:0005886">
    <property type="term" value="C:plasma membrane"/>
    <property type="evidence" value="ECO:0007669"/>
    <property type="project" value="UniProtKB-SubCell"/>
</dbReference>
<dbReference type="GO" id="GO:0052657">
    <property type="term" value="F:guanine phosphoribosyltransferase activity"/>
    <property type="evidence" value="ECO:0007669"/>
    <property type="project" value="RHEA"/>
</dbReference>
<dbReference type="GO" id="GO:0004422">
    <property type="term" value="F:hypoxanthine phosphoribosyltransferase activity"/>
    <property type="evidence" value="ECO:0007669"/>
    <property type="project" value="RHEA"/>
</dbReference>
<dbReference type="GO" id="GO:0000287">
    <property type="term" value="F:magnesium ion binding"/>
    <property type="evidence" value="ECO:0007669"/>
    <property type="project" value="UniProtKB-UniRule"/>
</dbReference>
<dbReference type="GO" id="GO:0000310">
    <property type="term" value="F:xanthine phosphoribosyltransferase activity"/>
    <property type="evidence" value="ECO:0007669"/>
    <property type="project" value="UniProtKB-UniRule"/>
</dbReference>
<dbReference type="GO" id="GO:0032263">
    <property type="term" value="P:GMP salvage"/>
    <property type="evidence" value="ECO:0007669"/>
    <property type="project" value="UniProtKB-UniRule"/>
</dbReference>
<dbReference type="GO" id="GO:0006166">
    <property type="term" value="P:purine ribonucleoside salvage"/>
    <property type="evidence" value="ECO:0007669"/>
    <property type="project" value="UniProtKB-KW"/>
</dbReference>
<dbReference type="GO" id="GO:0032265">
    <property type="term" value="P:XMP salvage"/>
    <property type="evidence" value="ECO:0007669"/>
    <property type="project" value="UniProtKB-UniRule"/>
</dbReference>
<dbReference type="CDD" id="cd06223">
    <property type="entry name" value="PRTases_typeI"/>
    <property type="match status" value="1"/>
</dbReference>
<dbReference type="Gene3D" id="3.40.50.2020">
    <property type="match status" value="1"/>
</dbReference>
<dbReference type="HAMAP" id="MF_01903">
    <property type="entry name" value="XGPRT"/>
    <property type="match status" value="1"/>
</dbReference>
<dbReference type="InterPro" id="IPR000836">
    <property type="entry name" value="PRibTrfase_dom"/>
</dbReference>
<dbReference type="InterPro" id="IPR029057">
    <property type="entry name" value="PRTase-like"/>
</dbReference>
<dbReference type="InterPro" id="IPR023747">
    <property type="entry name" value="Xanthine_Guanine_PRibTrfase"/>
</dbReference>
<dbReference type="NCBIfam" id="NF006613">
    <property type="entry name" value="PRK09177.1"/>
    <property type="match status" value="1"/>
</dbReference>
<dbReference type="PANTHER" id="PTHR39563">
    <property type="entry name" value="XANTHINE PHOSPHORIBOSYLTRANSFERASE"/>
    <property type="match status" value="1"/>
</dbReference>
<dbReference type="PANTHER" id="PTHR39563:SF1">
    <property type="entry name" value="XANTHINE-GUANINE PHOSPHORIBOSYLTRANSFERASE"/>
    <property type="match status" value="1"/>
</dbReference>
<dbReference type="Pfam" id="PF00156">
    <property type="entry name" value="Pribosyltran"/>
    <property type="match status" value="1"/>
</dbReference>
<dbReference type="SUPFAM" id="SSF53271">
    <property type="entry name" value="PRTase-like"/>
    <property type="match status" value="1"/>
</dbReference>
<organism>
    <name type="scientific">Brucella suis biovar 1 (strain 1330)</name>
    <dbReference type="NCBI Taxonomy" id="204722"/>
    <lineage>
        <taxon>Bacteria</taxon>
        <taxon>Pseudomonadati</taxon>
        <taxon>Pseudomonadota</taxon>
        <taxon>Alphaproteobacteria</taxon>
        <taxon>Hyphomicrobiales</taxon>
        <taxon>Brucellaceae</taxon>
        <taxon>Brucella/Ochrobactrum group</taxon>
        <taxon>Brucella</taxon>
    </lineage>
</organism>
<evidence type="ECO:0000255" key="1">
    <source>
        <dbReference type="HAMAP-Rule" id="MF_01903"/>
    </source>
</evidence>
<comment type="function">
    <text evidence="1">Purine salvage pathway enzyme that catalyzes the transfer of the ribosyl-5-phosphate group from 5-phospho-alpha-D-ribose 1-diphosphate (PRPP) to the N9 position of the 6-oxopurines guanine and xanthine to form the corresponding ribonucleotides GMP (guanosine 5'-monophosphate) and XMP (xanthosine 5'-monophosphate), with the release of PPi. To a lesser extent, also acts on hypoxanthine.</text>
</comment>
<comment type="catalytic activity">
    <reaction evidence="1">
        <text>GMP + diphosphate = guanine + 5-phospho-alpha-D-ribose 1-diphosphate</text>
        <dbReference type="Rhea" id="RHEA:25424"/>
        <dbReference type="ChEBI" id="CHEBI:16235"/>
        <dbReference type="ChEBI" id="CHEBI:33019"/>
        <dbReference type="ChEBI" id="CHEBI:58017"/>
        <dbReference type="ChEBI" id="CHEBI:58115"/>
    </reaction>
    <physiologicalReaction direction="right-to-left" evidence="1">
        <dbReference type="Rhea" id="RHEA:25426"/>
    </physiologicalReaction>
</comment>
<comment type="catalytic activity">
    <reaction evidence="1">
        <text>XMP + diphosphate = xanthine + 5-phospho-alpha-D-ribose 1-diphosphate</text>
        <dbReference type="Rhea" id="RHEA:10800"/>
        <dbReference type="ChEBI" id="CHEBI:17712"/>
        <dbReference type="ChEBI" id="CHEBI:33019"/>
        <dbReference type="ChEBI" id="CHEBI:57464"/>
        <dbReference type="ChEBI" id="CHEBI:58017"/>
        <dbReference type="EC" id="2.4.2.22"/>
    </reaction>
    <physiologicalReaction direction="right-to-left" evidence="1">
        <dbReference type="Rhea" id="RHEA:10802"/>
    </physiologicalReaction>
</comment>
<comment type="catalytic activity">
    <reaction evidence="1">
        <text>IMP + diphosphate = hypoxanthine + 5-phospho-alpha-D-ribose 1-diphosphate</text>
        <dbReference type="Rhea" id="RHEA:17973"/>
        <dbReference type="ChEBI" id="CHEBI:17368"/>
        <dbReference type="ChEBI" id="CHEBI:33019"/>
        <dbReference type="ChEBI" id="CHEBI:58017"/>
        <dbReference type="ChEBI" id="CHEBI:58053"/>
    </reaction>
    <physiologicalReaction direction="right-to-left" evidence="1">
        <dbReference type="Rhea" id="RHEA:17975"/>
    </physiologicalReaction>
</comment>
<comment type="cofactor">
    <cofactor evidence="1">
        <name>Mg(2+)</name>
        <dbReference type="ChEBI" id="CHEBI:18420"/>
    </cofactor>
</comment>
<comment type="pathway">
    <text evidence="1">Purine metabolism; GMP biosynthesis via salvage pathway; GMP from guanine: step 1/1.</text>
</comment>
<comment type="pathway">
    <text evidence="1">Purine metabolism; XMP biosynthesis via salvage pathway; XMP from xanthine: step 1/1.</text>
</comment>
<comment type="subunit">
    <text evidence="1">Homotetramer.</text>
</comment>
<comment type="subcellular location">
    <subcellularLocation>
        <location evidence="1">Cell inner membrane</location>
        <topology evidence="1">Peripheral membrane protein</topology>
    </subcellularLocation>
</comment>
<comment type="similarity">
    <text evidence="1">Belongs to the purine/pyrimidine phosphoribosyltransferase family. XGPT subfamily.</text>
</comment>
<proteinExistence type="inferred from homology"/>
<sequence length="165" mass="18370">MSLPDKAFPVSWDQFHRDARALAWRIAGLDREWRAIVAITRGGLVPAAIICRELGIRLIETVCIASYHDYTSQGEMQVLKGIGASLLENQGEGVIVVDDLTDTGKTAAIVREMMPRAHFATVYAKPKGRPLIDTFVTEVSQDTWIYFPWDMGFTYQEPIAGGKRG</sequence>
<reference key="1">
    <citation type="journal article" date="2002" name="Proc. Natl. Acad. Sci. U.S.A.">
        <title>The Brucella suis genome reveals fundamental similarities between animal and plant pathogens and symbionts.</title>
        <authorList>
            <person name="Paulsen I.T."/>
            <person name="Seshadri R."/>
            <person name="Nelson K.E."/>
            <person name="Eisen J.A."/>
            <person name="Heidelberg J.F."/>
            <person name="Read T.D."/>
            <person name="Dodson R.J."/>
            <person name="Umayam L.A."/>
            <person name="Brinkac L.M."/>
            <person name="Beanan M.J."/>
            <person name="Daugherty S.C."/>
            <person name="DeBoy R.T."/>
            <person name="Durkin A.S."/>
            <person name="Kolonay J.F."/>
            <person name="Madupu R."/>
            <person name="Nelson W.C."/>
            <person name="Ayodeji B."/>
            <person name="Kraul M."/>
            <person name="Shetty J."/>
            <person name="Malek J.A."/>
            <person name="Van Aken S.E."/>
            <person name="Riedmuller S."/>
            <person name="Tettelin H."/>
            <person name="Gill S.R."/>
            <person name="White O."/>
            <person name="Salzberg S.L."/>
            <person name="Hoover D.L."/>
            <person name="Lindler L.E."/>
            <person name="Halling S.M."/>
            <person name="Boyle S.M."/>
            <person name="Fraser C.M."/>
        </authorList>
    </citation>
    <scope>NUCLEOTIDE SEQUENCE [LARGE SCALE GENOMIC DNA]</scope>
    <source>
        <strain>1330</strain>
    </source>
</reference>
<reference key="2">
    <citation type="journal article" date="2011" name="J. Bacteriol.">
        <title>Revised genome sequence of Brucella suis 1330.</title>
        <authorList>
            <person name="Tae H."/>
            <person name="Shallom S."/>
            <person name="Settlage R."/>
            <person name="Preston D."/>
            <person name="Adams L.G."/>
            <person name="Garner H.R."/>
        </authorList>
    </citation>
    <scope>NUCLEOTIDE SEQUENCE [LARGE SCALE GENOMIC DNA]</scope>
    <source>
        <strain>1330</strain>
    </source>
</reference>
<feature type="chain" id="PRO_0000139659" description="Xanthine-guanine phosphoribosyltransferase">
    <location>
        <begin position="1"/>
        <end position="165"/>
    </location>
</feature>
<feature type="binding site" evidence="1">
    <location>
        <begin position="41"/>
        <end position="42"/>
    </location>
    <ligand>
        <name>5-phospho-alpha-D-ribose 1-diphosphate</name>
        <dbReference type="ChEBI" id="CHEBI:58017"/>
    </ligand>
</feature>
<feature type="binding site" evidence="1">
    <location>
        <begin position="98"/>
        <end position="106"/>
    </location>
    <ligand>
        <name>5-phospho-alpha-D-ribose 1-diphosphate</name>
        <dbReference type="ChEBI" id="CHEBI:58017"/>
    </ligand>
</feature>
<feature type="binding site" evidence="1">
    <location>
        <position position="99"/>
    </location>
    <ligand>
        <name>Mg(2+)</name>
        <dbReference type="ChEBI" id="CHEBI:18420"/>
    </ligand>
</feature>
<feature type="binding site" evidence="1">
    <location>
        <begin position="102"/>
        <end position="106"/>
    </location>
    <ligand>
        <name>GMP</name>
        <dbReference type="ChEBI" id="CHEBI:58115"/>
    </ligand>
</feature>
<feature type="binding site" evidence="1">
    <location>
        <position position="102"/>
    </location>
    <ligand>
        <name>guanine</name>
        <dbReference type="ChEBI" id="CHEBI:16235"/>
    </ligand>
</feature>
<feature type="binding site" evidence="1">
    <location>
        <position position="102"/>
    </location>
    <ligand>
        <name>xanthine</name>
        <dbReference type="ChEBI" id="CHEBI:17712"/>
    </ligand>
</feature>
<feature type="binding site" evidence="1">
    <location>
        <begin position="144"/>
        <end position="145"/>
    </location>
    <ligand>
        <name>GMP</name>
        <dbReference type="ChEBI" id="CHEBI:58115"/>
    </ligand>
</feature>
<feature type="binding site" evidence="1">
    <location>
        <position position="145"/>
    </location>
    <ligand>
        <name>guanine</name>
        <dbReference type="ChEBI" id="CHEBI:16235"/>
    </ligand>
</feature>
<feature type="binding site" evidence="1">
    <location>
        <position position="145"/>
    </location>
    <ligand>
        <name>xanthine</name>
        <dbReference type="ChEBI" id="CHEBI:17712"/>
    </ligand>
</feature>
<protein>
    <recommendedName>
        <fullName evidence="1">Xanthine-guanine phosphoribosyltransferase</fullName>
        <shortName evidence="1">XGPRT</shortName>
        <ecNumber evidence="1">2.4.2.-</ecNumber>
        <ecNumber evidence="1">2.4.2.22</ecNumber>
    </recommendedName>
    <alternativeName>
        <fullName evidence="1">Xanthine phosphoribosyltransferase</fullName>
    </alternativeName>
</protein>